<sequence>MPVLKQLGPAQPKKRPDRGALSISAPLGDFRHTLHVGRGGDAFGDTSFLSRHGGGPPPEPRAPPAGAPRSPPPPAVPQSAAPSPADPLLSFHLDLGPSMLDAVLGVMDAARPEAAAAKPDAEPRPGTQPPQARCRPNADLELNDVIGL</sequence>
<evidence type="ECO:0000250" key="1"/>
<evidence type="ECO:0000250" key="2">
    <source>
        <dbReference type="UniProtKB" id="Q9Z0X0"/>
    </source>
</evidence>
<evidence type="ECO:0000255" key="3">
    <source>
        <dbReference type="PROSITE-ProRule" id="PRU00057"/>
    </source>
</evidence>
<evidence type="ECO:0000256" key="4">
    <source>
        <dbReference type="SAM" id="MobiDB-lite"/>
    </source>
</evidence>
<evidence type="ECO:0000305" key="5"/>
<comment type="function">
    <text evidence="1">Probably involved in the organization of the actin cytoskeleton. May act downstream of CDC42 to induce actin filament assembly leading to cell shape changes. Induces pseudopodia formation in fibroblasts. Inhibits MAPK8 independently of CDC42 binding. Controls septin organization and this effect is negatively regulated by CDC42 (By similarity).</text>
</comment>
<comment type="subunit">
    <text evidence="1">Interacts with CDC42, in a GTP-dependent manner, and with SEPT7.</text>
</comment>
<comment type="subcellular location">
    <subcellularLocation>
        <location evidence="1">Endomembrane system</location>
        <topology evidence="1">Peripheral membrane protein</topology>
    </subcellularLocation>
    <subcellularLocation>
        <location evidence="1">Cytoplasm</location>
        <location evidence="1">Cytoskeleton</location>
    </subcellularLocation>
</comment>
<comment type="domain">
    <text evidence="1">The CRIB domain mediates interaction with CDC42.</text>
</comment>
<comment type="similarity">
    <text evidence="5">Belongs to the BORG/CEP family.</text>
</comment>
<proteinExistence type="evidence at protein level"/>
<protein>
    <recommendedName>
        <fullName>Cdc42 effector protein 5</fullName>
    </recommendedName>
    <alternativeName>
        <fullName>Binder of Rho GTPases 3</fullName>
    </alternativeName>
</protein>
<dbReference type="EMBL" id="CU467002">
    <property type="status" value="NOT_ANNOTATED_CDS"/>
    <property type="molecule type" value="Genomic_DNA"/>
</dbReference>
<dbReference type="EMBL" id="CU207370">
    <property type="status" value="NOT_ANNOTATED_CDS"/>
    <property type="molecule type" value="Genomic_DNA"/>
</dbReference>
<dbReference type="EMBL" id="CH471135">
    <property type="protein sequence ID" value="EAW72252.1"/>
    <property type="molecule type" value="Genomic_DNA"/>
</dbReference>
<dbReference type="EMBL" id="BC024327">
    <property type="protein sequence ID" value="AAH24327.1"/>
    <property type="molecule type" value="mRNA"/>
</dbReference>
<dbReference type="EMBL" id="BC065910">
    <property type="protein sequence ID" value="AAH65910.1"/>
    <property type="molecule type" value="mRNA"/>
</dbReference>
<dbReference type="CCDS" id="CCDS12896.1"/>
<dbReference type="RefSeq" id="NP_659494.2">
    <property type="nucleotide sequence ID" value="NM_145057.3"/>
</dbReference>
<dbReference type="BioGRID" id="127125">
    <property type="interactions" value="6"/>
</dbReference>
<dbReference type="FunCoup" id="Q6NZY7">
    <property type="interactions" value="105"/>
</dbReference>
<dbReference type="IntAct" id="Q6NZY7">
    <property type="interactions" value="1"/>
</dbReference>
<dbReference type="STRING" id="9606.ENSP00000301200"/>
<dbReference type="iPTMnet" id="Q6NZY7"/>
<dbReference type="PhosphoSitePlus" id="Q6NZY7"/>
<dbReference type="BioMuta" id="CDC42EP5"/>
<dbReference type="DMDM" id="71152342"/>
<dbReference type="jPOST" id="Q6NZY7"/>
<dbReference type="MassIVE" id="Q6NZY7"/>
<dbReference type="PaxDb" id="9606-ENSP00000301200"/>
<dbReference type="PeptideAtlas" id="Q6NZY7"/>
<dbReference type="ProteomicsDB" id="66800"/>
<dbReference type="Antibodypedia" id="50438">
    <property type="antibodies" value="79 antibodies from 23 providers"/>
</dbReference>
<dbReference type="DNASU" id="148170"/>
<dbReference type="Ensembl" id="ENST00000301200.3">
    <property type="protein sequence ID" value="ENSP00000301200.2"/>
    <property type="gene ID" value="ENSG00000167617.3"/>
</dbReference>
<dbReference type="Ensembl" id="ENST00000611094.1">
    <property type="protein sequence ID" value="ENSP00000484985.1"/>
    <property type="gene ID" value="ENSG00000273622.1"/>
</dbReference>
<dbReference type="Ensembl" id="ENST00000617756.1">
    <property type="protein sequence ID" value="ENSP00000484158.1"/>
    <property type="gene ID" value="ENSG00000273633.1"/>
</dbReference>
<dbReference type="Ensembl" id="ENST00000619217.1">
    <property type="protein sequence ID" value="ENSP00000479726.1"/>
    <property type="gene ID" value="ENSG00000278444.1"/>
</dbReference>
<dbReference type="GeneID" id="148170"/>
<dbReference type="KEGG" id="hsa:148170"/>
<dbReference type="MANE-Select" id="ENST00000301200.3">
    <property type="protein sequence ID" value="ENSP00000301200.2"/>
    <property type="RefSeq nucleotide sequence ID" value="NM_145057.4"/>
    <property type="RefSeq protein sequence ID" value="NP_659494.2"/>
</dbReference>
<dbReference type="UCSC" id="uc002qfz.3">
    <property type="organism name" value="human"/>
</dbReference>
<dbReference type="AGR" id="HGNC:17408"/>
<dbReference type="CTD" id="148170"/>
<dbReference type="DisGeNET" id="148170"/>
<dbReference type="GeneCards" id="CDC42EP5"/>
<dbReference type="HGNC" id="HGNC:17408">
    <property type="gene designation" value="CDC42EP5"/>
</dbReference>
<dbReference type="HPA" id="ENSG00000167617">
    <property type="expression patterns" value="Tissue enhanced (intestine, prostate)"/>
</dbReference>
<dbReference type="MIM" id="609171">
    <property type="type" value="gene"/>
</dbReference>
<dbReference type="neXtProt" id="NX_Q6NZY7"/>
<dbReference type="OpenTargets" id="ENSG00000167617"/>
<dbReference type="PharmGKB" id="PA134989100"/>
<dbReference type="VEuPathDB" id="HostDB:ENSG00000167617"/>
<dbReference type="eggNOG" id="ENOG502S9WH">
    <property type="taxonomic scope" value="Eukaryota"/>
</dbReference>
<dbReference type="GeneTree" id="ENSGT00940000162969"/>
<dbReference type="HOGENOM" id="CLU_067835_1_0_1"/>
<dbReference type="InParanoid" id="Q6NZY7"/>
<dbReference type="OMA" id="HPRARCH"/>
<dbReference type="OrthoDB" id="8898624at2759"/>
<dbReference type="PAN-GO" id="Q6NZY7">
    <property type="GO annotations" value="7 GO annotations based on evolutionary models"/>
</dbReference>
<dbReference type="PhylomeDB" id="Q6NZY7"/>
<dbReference type="TreeFam" id="TF331725"/>
<dbReference type="PathwayCommons" id="Q6NZY7"/>
<dbReference type="Reactome" id="R-HSA-5687128">
    <property type="pathway name" value="MAPK6/MAPK4 signaling"/>
</dbReference>
<dbReference type="Reactome" id="R-HSA-9013148">
    <property type="pathway name" value="CDC42 GTPase cycle"/>
</dbReference>
<dbReference type="SignaLink" id="Q6NZY7"/>
<dbReference type="BioGRID-ORCS" id="148170">
    <property type="hits" value="9 hits in 1142 CRISPR screens"/>
</dbReference>
<dbReference type="ChiTaRS" id="CDC42EP5">
    <property type="organism name" value="human"/>
</dbReference>
<dbReference type="GenomeRNAi" id="148170"/>
<dbReference type="Pharos" id="Q6NZY7">
    <property type="development level" value="Tbio"/>
</dbReference>
<dbReference type="PRO" id="PR:Q6NZY7"/>
<dbReference type="Proteomes" id="UP000005640">
    <property type="component" value="Chromosome 19"/>
</dbReference>
<dbReference type="RNAct" id="Q6NZY7">
    <property type="molecule type" value="protein"/>
</dbReference>
<dbReference type="Bgee" id="ENSG00000167617">
    <property type="expression patterns" value="Expressed in mucosa of transverse colon and 90 other cell types or tissues"/>
</dbReference>
<dbReference type="GO" id="GO:0005737">
    <property type="term" value="C:cytoplasm"/>
    <property type="evidence" value="ECO:0000314"/>
    <property type="project" value="UniProtKB"/>
</dbReference>
<dbReference type="GO" id="GO:0005856">
    <property type="term" value="C:cytoskeleton"/>
    <property type="evidence" value="ECO:0000318"/>
    <property type="project" value="GO_Central"/>
</dbReference>
<dbReference type="GO" id="GO:0005829">
    <property type="term" value="C:cytosol"/>
    <property type="evidence" value="ECO:0000304"/>
    <property type="project" value="Reactome"/>
</dbReference>
<dbReference type="GO" id="GO:0012505">
    <property type="term" value="C:endomembrane system"/>
    <property type="evidence" value="ECO:0007669"/>
    <property type="project" value="UniProtKB-SubCell"/>
</dbReference>
<dbReference type="GO" id="GO:0016020">
    <property type="term" value="C:membrane"/>
    <property type="evidence" value="ECO:0000314"/>
    <property type="project" value="UniProtKB"/>
</dbReference>
<dbReference type="GO" id="GO:0005886">
    <property type="term" value="C:plasma membrane"/>
    <property type="evidence" value="ECO:0000318"/>
    <property type="project" value="GO_Central"/>
</dbReference>
<dbReference type="GO" id="GO:0031267">
    <property type="term" value="F:small GTPase binding"/>
    <property type="evidence" value="ECO:0000353"/>
    <property type="project" value="UniProtKB"/>
</dbReference>
<dbReference type="GO" id="GO:0007254">
    <property type="term" value="P:JNK cascade"/>
    <property type="evidence" value="ECO:0007669"/>
    <property type="project" value="Ensembl"/>
</dbReference>
<dbReference type="GO" id="GO:0030838">
    <property type="term" value="P:positive regulation of actin filament polymerization"/>
    <property type="evidence" value="ECO:0000314"/>
    <property type="project" value="UniProtKB"/>
</dbReference>
<dbReference type="GO" id="GO:0031274">
    <property type="term" value="P:positive regulation of pseudopodium assembly"/>
    <property type="evidence" value="ECO:0000314"/>
    <property type="project" value="UniProtKB"/>
</dbReference>
<dbReference type="GO" id="GO:0008360">
    <property type="term" value="P:regulation of cell shape"/>
    <property type="evidence" value="ECO:0000314"/>
    <property type="project" value="UniProtKB"/>
</dbReference>
<dbReference type="GO" id="GO:0007266">
    <property type="term" value="P:Rho protein signal transduction"/>
    <property type="evidence" value="ECO:0000318"/>
    <property type="project" value="GO_Central"/>
</dbReference>
<dbReference type="InterPro" id="IPR029273">
    <property type="entry name" value="Cdc42_effect-like"/>
</dbReference>
<dbReference type="InterPro" id="IPR051296">
    <property type="entry name" value="Cdc42_Effector_BORG/CEP"/>
</dbReference>
<dbReference type="InterPro" id="IPR000095">
    <property type="entry name" value="CRIB_dom"/>
</dbReference>
<dbReference type="PANTHER" id="PTHR15344:SF15">
    <property type="entry name" value="CDC42 EFFECTOR PROTEIN 5"/>
    <property type="match status" value="1"/>
</dbReference>
<dbReference type="PANTHER" id="PTHR15344">
    <property type="entry name" value="CDC42 EFFECTOR PROTEIN BORG"/>
    <property type="match status" value="1"/>
</dbReference>
<dbReference type="Pfam" id="PF14957">
    <property type="entry name" value="BORG_CEP"/>
    <property type="match status" value="1"/>
</dbReference>
<dbReference type="Pfam" id="PF00786">
    <property type="entry name" value="PBD"/>
    <property type="match status" value="1"/>
</dbReference>
<dbReference type="SMART" id="SM00285">
    <property type="entry name" value="PBD"/>
    <property type="match status" value="1"/>
</dbReference>
<dbReference type="PROSITE" id="PS50108">
    <property type="entry name" value="CRIB"/>
    <property type="match status" value="1"/>
</dbReference>
<name>BORG3_HUMAN</name>
<accession>Q6NZY7</accession>
<accession>B0VJZ2</accession>
<accession>Q8TB51</accession>
<feature type="chain" id="PRO_0000212653" description="Cdc42 effector protein 5">
    <location>
        <begin position="1"/>
        <end position="148"/>
    </location>
</feature>
<feature type="domain" description="CRIB" evidence="3">
    <location>
        <begin position="23"/>
        <end position="37"/>
    </location>
</feature>
<feature type="region of interest" description="Disordered" evidence="4">
    <location>
        <begin position="1"/>
        <end position="89"/>
    </location>
</feature>
<feature type="region of interest" description="Disordered" evidence="4">
    <location>
        <begin position="111"/>
        <end position="148"/>
    </location>
</feature>
<feature type="compositionally biased region" description="Pro residues" evidence="4">
    <location>
        <begin position="55"/>
        <end position="76"/>
    </location>
</feature>
<feature type="compositionally biased region" description="Low complexity" evidence="4">
    <location>
        <begin position="77"/>
        <end position="87"/>
    </location>
</feature>
<feature type="modified residue" description="Omega-N-methylarginine" evidence="2">
    <location>
        <position position="38"/>
    </location>
</feature>
<feature type="sequence conflict" description="In Ref. 3; AAH24327." evidence="5" ref="3">
    <original>E</original>
    <variation>Q</variation>
    <location>
        <position position="59"/>
    </location>
</feature>
<organism>
    <name type="scientific">Homo sapiens</name>
    <name type="common">Human</name>
    <dbReference type="NCBI Taxonomy" id="9606"/>
    <lineage>
        <taxon>Eukaryota</taxon>
        <taxon>Metazoa</taxon>
        <taxon>Chordata</taxon>
        <taxon>Craniata</taxon>
        <taxon>Vertebrata</taxon>
        <taxon>Euteleostomi</taxon>
        <taxon>Mammalia</taxon>
        <taxon>Eutheria</taxon>
        <taxon>Euarchontoglires</taxon>
        <taxon>Primates</taxon>
        <taxon>Haplorrhini</taxon>
        <taxon>Catarrhini</taxon>
        <taxon>Hominidae</taxon>
        <taxon>Homo</taxon>
    </lineage>
</organism>
<keyword id="KW-0133">Cell shape</keyword>
<keyword id="KW-0963">Cytoplasm</keyword>
<keyword id="KW-0206">Cytoskeleton</keyword>
<keyword id="KW-0472">Membrane</keyword>
<keyword id="KW-0488">Methylation</keyword>
<keyword id="KW-1267">Proteomics identification</keyword>
<keyword id="KW-1185">Reference proteome</keyword>
<reference key="1">
    <citation type="journal article" date="2004" name="Nature">
        <title>The DNA sequence and biology of human chromosome 19.</title>
        <authorList>
            <person name="Grimwood J."/>
            <person name="Gordon L.A."/>
            <person name="Olsen A.S."/>
            <person name="Terry A."/>
            <person name="Schmutz J."/>
            <person name="Lamerdin J.E."/>
            <person name="Hellsten U."/>
            <person name="Goodstein D."/>
            <person name="Couronne O."/>
            <person name="Tran-Gyamfi M."/>
            <person name="Aerts A."/>
            <person name="Altherr M."/>
            <person name="Ashworth L."/>
            <person name="Bajorek E."/>
            <person name="Black S."/>
            <person name="Branscomb E."/>
            <person name="Caenepeel S."/>
            <person name="Carrano A.V."/>
            <person name="Caoile C."/>
            <person name="Chan Y.M."/>
            <person name="Christensen M."/>
            <person name="Cleland C.A."/>
            <person name="Copeland A."/>
            <person name="Dalin E."/>
            <person name="Dehal P."/>
            <person name="Denys M."/>
            <person name="Detter J.C."/>
            <person name="Escobar J."/>
            <person name="Flowers D."/>
            <person name="Fotopulos D."/>
            <person name="Garcia C."/>
            <person name="Georgescu A.M."/>
            <person name="Glavina T."/>
            <person name="Gomez M."/>
            <person name="Gonzales E."/>
            <person name="Groza M."/>
            <person name="Hammon N."/>
            <person name="Hawkins T."/>
            <person name="Haydu L."/>
            <person name="Ho I."/>
            <person name="Huang W."/>
            <person name="Israni S."/>
            <person name="Jett J."/>
            <person name="Kadner K."/>
            <person name="Kimball H."/>
            <person name="Kobayashi A."/>
            <person name="Larionov V."/>
            <person name="Leem S.-H."/>
            <person name="Lopez F."/>
            <person name="Lou Y."/>
            <person name="Lowry S."/>
            <person name="Malfatti S."/>
            <person name="Martinez D."/>
            <person name="McCready P.M."/>
            <person name="Medina C."/>
            <person name="Morgan J."/>
            <person name="Nelson K."/>
            <person name="Nolan M."/>
            <person name="Ovcharenko I."/>
            <person name="Pitluck S."/>
            <person name="Pollard M."/>
            <person name="Popkie A.P."/>
            <person name="Predki P."/>
            <person name="Quan G."/>
            <person name="Ramirez L."/>
            <person name="Rash S."/>
            <person name="Retterer J."/>
            <person name="Rodriguez A."/>
            <person name="Rogers S."/>
            <person name="Salamov A."/>
            <person name="Salazar A."/>
            <person name="She X."/>
            <person name="Smith D."/>
            <person name="Slezak T."/>
            <person name="Solovyev V."/>
            <person name="Thayer N."/>
            <person name="Tice H."/>
            <person name="Tsai M."/>
            <person name="Ustaszewska A."/>
            <person name="Vo N."/>
            <person name="Wagner M."/>
            <person name="Wheeler J."/>
            <person name="Wu K."/>
            <person name="Xie G."/>
            <person name="Yang J."/>
            <person name="Dubchak I."/>
            <person name="Furey T.S."/>
            <person name="DeJong P."/>
            <person name="Dickson M."/>
            <person name="Gordon D."/>
            <person name="Eichler E.E."/>
            <person name="Pennacchio L.A."/>
            <person name="Richardson P."/>
            <person name="Stubbs L."/>
            <person name="Rokhsar D.S."/>
            <person name="Myers R.M."/>
            <person name="Rubin E.M."/>
            <person name="Lucas S.M."/>
        </authorList>
    </citation>
    <scope>NUCLEOTIDE SEQUENCE [LARGE SCALE GENOMIC DNA]</scope>
</reference>
<reference key="2">
    <citation type="submission" date="2005-07" db="EMBL/GenBank/DDBJ databases">
        <authorList>
            <person name="Mural R.J."/>
            <person name="Istrail S."/>
            <person name="Sutton G.G."/>
            <person name="Florea L."/>
            <person name="Halpern A.L."/>
            <person name="Mobarry C.M."/>
            <person name="Lippert R."/>
            <person name="Walenz B."/>
            <person name="Shatkay H."/>
            <person name="Dew I."/>
            <person name="Miller J.R."/>
            <person name="Flanigan M.J."/>
            <person name="Edwards N.J."/>
            <person name="Bolanos R."/>
            <person name="Fasulo D."/>
            <person name="Halldorsson B.V."/>
            <person name="Hannenhalli S."/>
            <person name="Turner R."/>
            <person name="Yooseph S."/>
            <person name="Lu F."/>
            <person name="Nusskern D.R."/>
            <person name="Shue B.C."/>
            <person name="Zheng X.H."/>
            <person name="Zhong F."/>
            <person name="Delcher A.L."/>
            <person name="Huson D.H."/>
            <person name="Kravitz S.A."/>
            <person name="Mouchard L."/>
            <person name="Reinert K."/>
            <person name="Remington K.A."/>
            <person name="Clark A.G."/>
            <person name="Waterman M.S."/>
            <person name="Eichler E.E."/>
            <person name="Adams M.D."/>
            <person name="Hunkapiller M.W."/>
            <person name="Myers E.W."/>
            <person name="Venter J.C."/>
        </authorList>
    </citation>
    <scope>NUCLEOTIDE SEQUENCE [LARGE SCALE GENOMIC DNA]</scope>
</reference>
<reference key="3">
    <citation type="journal article" date="2004" name="Genome Res.">
        <title>The status, quality, and expansion of the NIH full-length cDNA project: the Mammalian Gene Collection (MGC).</title>
        <authorList>
            <consortium name="The MGC Project Team"/>
        </authorList>
    </citation>
    <scope>NUCLEOTIDE SEQUENCE [LARGE SCALE MRNA]</scope>
    <source>
        <tissue>Bone</tissue>
        <tissue>Pancreas</tissue>
    </source>
</reference>
<gene>
    <name type="primary">CDC42EP5</name>
    <name type="synonym">BORG3</name>
    <name type="synonym">CEP5</name>
</gene>